<protein>
    <recommendedName>
        <fullName evidence="1">Probable cytosolic iron-sulfur protein assembly protein Ciao1</fullName>
    </recommendedName>
</protein>
<name>CIAO1_DROAN</name>
<sequence length="335" mass="37198">MGRLNLEHTLQGHKGRIWGVAWHPKGNVFASCGEDKAIRIWSLNGNTWTTKTILSDGHKRTIREIRWSPCGQYLASASFDGTTAIWSKSSGEFECNATLEGHENEVKSVSWSRSGGLLATCSRDKSVWIWEVAGDDEFECAAVLNPHTQDVKRVVWHPTKELLASASYDNTIKMFAEDALDSDWDCVATLSSHTSTVWSIDFDATGERLVSCSDDTSLKIWQAYHPGNDAGVATPDKQTVWKCVCTISGQHSRAIYDVSWCKLTNLIATACGDDGIRIFKETSDSKRDEPTFEQLTAEEGAHDQDVNSVEWNPVVEGQLISCSDDGTIKVWKMTE</sequence>
<proteinExistence type="inferred from homology"/>
<evidence type="ECO:0000255" key="1">
    <source>
        <dbReference type="HAMAP-Rule" id="MF_03037"/>
    </source>
</evidence>
<reference key="1">
    <citation type="journal article" date="2007" name="Nature">
        <title>Evolution of genes and genomes on the Drosophila phylogeny.</title>
        <authorList>
            <consortium name="Drosophila 12 genomes consortium"/>
        </authorList>
    </citation>
    <scope>NUCLEOTIDE SEQUENCE [LARGE SCALE GENOMIC DNA]</scope>
    <source>
        <strain>Tucson 14024-0371.13</strain>
    </source>
</reference>
<comment type="function">
    <text evidence="1">Essential component of the cytosolic iron-sulfur (Fe/S) protein assembly machinery. Required for the maturation of extramitochondrial Fe/S proteins.</text>
</comment>
<comment type="similarity">
    <text evidence="1">Belongs to the WD repeat CIA1 family.</text>
</comment>
<dbReference type="EMBL" id="CH902619">
    <property type="protein sequence ID" value="EDV36174.1"/>
    <property type="molecule type" value="Genomic_DNA"/>
</dbReference>
<dbReference type="SMR" id="B3MC74"/>
<dbReference type="FunCoup" id="B3MC74">
    <property type="interactions" value="680"/>
</dbReference>
<dbReference type="STRING" id="7217.B3MC74"/>
<dbReference type="EnsemblMetazoa" id="FBtr0116785">
    <property type="protein sequence ID" value="FBpp0115277"/>
    <property type="gene ID" value="FBgn0089124"/>
</dbReference>
<dbReference type="EnsemblMetazoa" id="XM_001959316.4">
    <property type="protein sequence ID" value="XP_001959352.1"/>
    <property type="gene ID" value="LOC6494943"/>
</dbReference>
<dbReference type="GeneID" id="6494943"/>
<dbReference type="KEGG" id="dan:6494943"/>
<dbReference type="CTD" id="9391"/>
<dbReference type="eggNOG" id="KOG0645">
    <property type="taxonomic scope" value="Eukaryota"/>
</dbReference>
<dbReference type="HOGENOM" id="CLU_000288_57_8_1"/>
<dbReference type="InParanoid" id="B3MC74"/>
<dbReference type="OMA" id="IREIRWS"/>
<dbReference type="OrthoDB" id="284782at2759"/>
<dbReference type="PhylomeDB" id="B3MC74"/>
<dbReference type="Proteomes" id="UP000007801">
    <property type="component" value="Unassembled WGS sequence"/>
</dbReference>
<dbReference type="GO" id="GO:0097361">
    <property type="term" value="C:cytosolic [4Fe-4S] assembly targeting complex"/>
    <property type="evidence" value="ECO:0007669"/>
    <property type="project" value="EnsemblMetazoa"/>
</dbReference>
<dbReference type="GO" id="GO:1902695">
    <property type="term" value="C:metallochaperone complex"/>
    <property type="evidence" value="ECO:0007669"/>
    <property type="project" value="EnsemblMetazoa"/>
</dbReference>
<dbReference type="GO" id="GO:0016226">
    <property type="term" value="P:iron-sulfur cluster assembly"/>
    <property type="evidence" value="ECO:0007669"/>
    <property type="project" value="UniProtKB-UniRule"/>
</dbReference>
<dbReference type="GO" id="GO:0051604">
    <property type="term" value="P:protein maturation"/>
    <property type="evidence" value="ECO:0000250"/>
    <property type="project" value="UniProtKB"/>
</dbReference>
<dbReference type="CDD" id="cd00200">
    <property type="entry name" value="WD40"/>
    <property type="match status" value="1"/>
</dbReference>
<dbReference type="FunFam" id="2.130.10.10:FF:000136">
    <property type="entry name" value="Probable cytosolic iron-sulfur protein assembly protein CIAO1"/>
    <property type="match status" value="1"/>
</dbReference>
<dbReference type="Gene3D" id="2.130.10.10">
    <property type="entry name" value="YVTN repeat-like/Quinoprotein amine dehydrogenase"/>
    <property type="match status" value="1"/>
</dbReference>
<dbReference type="HAMAP" id="MF_03037">
    <property type="entry name" value="ciao1"/>
    <property type="match status" value="1"/>
</dbReference>
<dbReference type="InterPro" id="IPR028608">
    <property type="entry name" value="CIAO1/Cia1"/>
</dbReference>
<dbReference type="InterPro" id="IPR020472">
    <property type="entry name" value="G-protein_beta_WD-40_rep"/>
</dbReference>
<dbReference type="InterPro" id="IPR015943">
    <property type="entry name" value="WD40/YVTN_repeat-like_dom_sf"/>
</dbReference>
<dbReference type="InterPro" id="IPR019775">
    <property type="entry name" value="WD40_repeat_CS"/>
</dbReference>
<dbReference type="InterPro" id="IPR036322">
    <property type="entry name" value="WD40_repeat_dom_sf"/>
</dbReference>
<dbReference type="InterPro" id="IPR001680">
    <property type="entry name" value="WD40_rpt"/>
</dbReference>
<dbReference type="PANTHER" id="PTHR19920:SF0">
    <property type="entry name" value="CYTOSOLIC IRON-SULFUR PROTEIN ASSEMBLY PROTEIN CIAO1-RELATED"/>
    <property type="match status" value="1"/>
</dbReference>
<dbReference type="PANTHER" id="PTHR19920">
    <property type="entry name" value="WD40 PROTEIN CIAO1"/>
    <property type="match status" value="1"/>
</dbReference>
<dbReference type="Pfam" id="PF00400">
    <property type="entry name" value="WD40"/>
    <property type="match status" value="7"/>
</dbReference>
<dbReference type="PRINTS" id="PR00320">
    <property type="entry name" value="GPROTEINBRPT"/>
</dbReference>
<dbReference type="SMART" id="SM00320">
    <property type="entry name" value="WD40"/>
    <property type="match status" value="7"/>
</dbReference>
<dbReference type="SUPFAM" id="SSF50978">
    <property type="entry name" value="WD40 repeat-like"/>
    <property type="match status" value="1"/>
</dbReference>
<dbReference type="PROSITE" id="PS00678">
    <property type="entry name" value="WD_REPEATS_1"/>
    <property type="match status" value="1"/>
</dbReference>
<dbReference type="PROSITE" id="PS50082">
    <property type="entry name" value="WD_REPEATS_2"/>
    <property type="match status" value="6"/>
</dbReference>
<dbReference type="PROSITE" id="PS50294">
    <property type="entry name" value="WD_REPEATS_REGION"/>
    <property type="match status" value="1"/>
</dbReference>
<gene>
    <name evidence="1" type="primary">Ciao1</name>
    <name type="ORF">GF12085</name>
</gene>
<organism>
    <name type="scientific">Drosophila ananassae</name>
    <name type="common">Fruit fly</name>
    <dbReference type="NCBI Taxonomy" id="7217"/>
    <lineage>
        <taxon>Eukaryota</taxon>
        <taxon>Metazoa</taxon>
        <taxon>Ecdysozoa</taxon>
        <taxon>Arthropoda</taxon>
        <taxon>Hexapoda</taxon>
        <taxon>Insecta</taxon>
        <taxon>Pterygota</taxon>
        <taxon>Neoptera</taxon>
        <taxon>Endopterygota</taxon>
        <taxon>Diptera</taxon>
        <taxon>Brachycera</taxon>
        <taxon>Muscomorpha</taxon>
        <taxon>Ephydroidea</taxon>
        <taxon>Drosophilidae</taxon>
        <taxon>Drosophila</taxon>
        <taxon>Sophophora</taxon>
    </lineage>
</organism>
<accession>B3MC74</accession>
<keyword id="KW-1185">Reference proteome</keyword>
<keyword id="KW-0677">Repeat</keyword>
<keyword id="KW-0853">WD repeat</keyword>
<feature type="chain" id="PRO_0000382483" description="Probable cytosolic iron-sulfur protein assembly protein Ciao1">
    <location>
        <begin position="1"/>
        <end position="335"/>
    </location>
</feature>
<feature type="repeat" description="WD 1">
    <location>
        <begin position="12"/>
        <end position="51"/>
    </location>
</feature>
<feature type="repeat" description="WD 2">
    <location>
        <begin position="57"/>
        <end position="96"/>
    </location>
</feature>
<feature type="repeat" description="WD 3">
    <location>
        <begin position="101"/>
        <end position="140"/>
    </location>
</feature>
<feature type="repeat" description="WD 4">
    <location>
        <begin position="146"/>
        <end position="185"/>
    </location>
</feature>
<feature type="repeat" description="WD 5">
    <location>
        <begin position="192"/>
        <end position="231"/>
    </location>
</feature>
<feature type="repeat" description="WD 6">
    <location>
        <begin position="250"/>
        <end position="289"/>
    </location>
</feature>
<feature type="repeat" description="WD 7">
    <location>
        <begin position="301"/>
        <end position="335"/>
    </location>
</feature>